<proteinExistence type="inferred from homology"/>
<name>SYFA_METHJ</name>
<feature type="chain" id="PRO_1000007660" description="Phenylalanine--tRNA ligase alpha subunit">
    <location>
        <begin position="1"/>
        <end position="478"/>
    </location>
</feature>
<feature type="binding site" evidence="1">
    <location>
        <position position="318"/>
    </location>
    <ligand>
        <name>L-phenylalanine</name>
        <dbReference type="ChEBI" id="CHEBI:58095"/>
    </ligand>
</feature>
<feature type="binding site" evidence="1">
    <location>
        <begin position="357"/>
        <end position="359"/>
    </location>
    <ligand>
        <name>L-phenylalanine</name>
        <dbReference type="ChEBI" id="CHEBI:58095"/>
    </ligand>
</feature>
<feature type="binding site" evidence="1">
    <location>
        <position position="397"/>
    </location>
    <ligand>
        <name>L-phenylalanine</name>
        <dbReference type="ChEBI" id="CHEBI:58095"/>
    </ligand>
</feature>
<feature type="binding site" evidence="1">
    <location>
        <position position="399"/>
    </location>
    <ligand>
        <name>Mg(2+)</name>
        <dbReference type="ChEBI" id="CHEBI:18420"/>
        <note>shared with beta subunit</note>
    </ligand>
</feature>
<feature type="binding site" evidence="1">
    <location>
        <position position="422"/>
    </location>
    <ligand>
        <name>L-phenylalanine</name>
        <dbReference type="ChEBI" id="CHEBI:58095"/>
    </ligand>
</feature>
<gene>
    <name evidence="1" type="primary">pheS</name>
    <name type="ordered locus">Mhun_1729</name>
</gene>
<evidence type="ECO:0000255" key="1">
    <source>
        <dbReference type="HAMAP-Rule" id="MF_00282"/>
    </source>
</evidence>
<dbReference type="EC" id="6.1.1.20" evidence="1"/>
<dbReference type="EMBL" id="CP000254">
    <property type="protein sequence ID" value="ABD41452.1"/>
    <property type="molecule type" value="Genomic_DNA"/>
</dbReference>
<dbReference type="RefSeq" id="WP_011448717.1">
    <property type="nucleotide sequence ID" value="NC_007796.1"/>
</dbReference>
<dbReference type="SMR" id="Q2FLL0"/>
<dbReference type="FunCoup" id="Q2FLL0">
    <property type="interactions" value="244"/>
</dbReference>
<dbReference type="STRING" id="323259.Mhun_1729"/>
<dbReference type="EnsemblBacteria" id="ABD41452">
    <property type="protein sequence ID" value="ABD41452"/>
    <property type="gene ID" value="Mhun_1729"/>
</dbReference>
<dbReference type="GeneID" id="3924933"/>
<dbReference type="KEGG" id="mhu:Mhun_1729"/>
<dbReference type="eggNOG" id="arCOG00410">
    <property type="taxonomic scope" value="Archaea"/>
</dbReference>
<dbReference type="HOGENOM" id="CLU_025086_2_2_2"/>
<dbReference type="InParanoid" id="Q2FLL0"/>
<dbReference type="OrthoDB" id="372178at2157"/>
<dbReference type="Proteomes" id="UP000001941">
    <property type="component" value="Chromosome"/>
</dbReference>
<dbReference type="GO" id="GO:0005737">
    <property type="term" value="C:cytoplasm"/>
    <property type="evidence" value="ECO:0007669"/>
    <property type="project" value="UniProtKB-SubCell"/>
</dbReference>
<dbReference type="GO" id="GO:0005524">
    <property type="term" value="F:ATP binding"/>
    <property type="evidence" value="ECO:0007669"/>
    <property type="project" value="UniProtKB-UniRule"/>
</dbReference>
<dbReference type="GO" id="GO:0000287">
    <property type="term" value="F:magnesium ion binding"/>
    <property type="evidence" value="ECO:0007669"/>
    <property type="project" value="UniProtKB-UniRule"/>
</dbReference>
<dbReference type="GO" id="GO:0004826">
    <property type="term" value="F:phenylalanine-tRNA ligase activity"/>
    <property type="evidence" value="ECO:0007669"/>
    <property type="project" value="UniProtKB-UniRule"/>
</dbReference>
<dbReference type="GO" id="GO:0000049">
    <property type="term" value="F:tRNA binding"/>
    <property type="evidence" value="ECO:0007669"/>
    <property type="project" value="InterPro"/>
</dbReference>
<dbReference type="GO" id="GO:0006432">
    <property type="term" value="P:phenylalanyl-tRNA aminoacylation"/>
    <property type="evidence" value="ECO:0007669"/>
    <property type="project" value="UniProtKB-UniRule"/>
</dbReference>
<dbReference type="CDD" id="cd00496">
    <property type="entry name" value="PheRS_alpha_core"/>
    <property type="match status" value="1"/>
</dbReference>
<dbReference type="FunFam" id="3.30.930.10:FF:000095">
    <property type="entry name" value="Phenylalanine--tRNA ligase alpha subunit"/>
    <property type="match status" value="1"/>
</dbReference>
<dbReference type="Gene3D" id="1.10.10.2320">
    <property type="match status" value="1"/>
</dbReference>
<dbReference type="Gene3D" id="1.10.10.2330">
    <property type="match status" value="1"/>
</dbReference>
<dbReference type="Gene3D" id="3.30.1370.240">
    <property type="match status" value="1"/>
</dbReference>
<dbReference type="Gene3D" id="3.30.930.10">
    <property type="entry name" value="Bira Bifunctional Protein, Domain 2"/>
    <property type="match status" value="1"/>
</dbReference>
<dbReference type="HAMAP" id="MF_00282">
    <property type="entry name" value="Phe_tRNA_synth_alpha2"/>
    <property type="match status" value="1"/>
</dbReference>
<dbReference type="InterPro" id="IPR006195">
    <property type="entry name" value="aa-tRNA-synth_II"/>
</dbReference>
<dbReference type="InterPro" id="IPR045864">
    <property type="entry name" value="aa-tRNA-synth_II/BPL/LPL"/>
</dbReference>
<dbReference type="InterPro" id="IPR004529">
    <property type="entry name" value="Phe-tRNA-synth_IIc_asu"/>
</dbReference>
<dbReference type="InterPro" id="IPR022917">
    <property type="entry name" value="Phe_tRNA_ligase_alpha_bac/arc"/>
</dbReference>
<dbReference type="InterPro" id="IPR002319">
    <property type="entry name" value="Phenylalanyl-tRNA_Synthase"/>
</dbReference>
<dbReference type="NCBIfam" id="TIGR00468">
    <property type="entry name" value="pheS"/>
    <property type="match status" value="1"/>
</dbReference>
<dbReference type="NCBIfam" id="NF003210">
    <property type="entry name" value="PRK04172.1"/>
    <property type="match status" value="1"/>
</dbReference>
<dbReference type="PANTHER" id="PTHR11538:SF40">
    <property type="entry name" value="PHENYLALANINE--TRNA LIGASE ALPHA SUBUNIT"/>
    <property type="match status" value="1"/>
</dbReference>
<dbReference type="PANTHER" id="PTHR11538">
    <property type="entry name" value="PHENYLALANYL-TRNA SYNTHETASE"/>
    <property type="match status" value="1"/>
</dbReference>
<dbReference type="Pfam" id="PF01409">
    <property type="entry name" value="tRNA-synt_2d"/>
    <property type="match status" value="1"/>
</dbReference>
<dbReference type="SUPFAM" id="SSF55681">
    <property type="entry name" value="Class II aaRS and biotin synthetases"/>
    <property type="match status" value="1"/>
</dbReference>
<dbReference type="PROSITE" id="PS50862">
    <property type="entry name" value="AA_TRNA_LIGASE_II"/>
    <property type="match status" value="1"/>
</dbReference>
<sequence length="478" mass="53544">MQLTLNEKRLLLELVKTETTTPEEMGTILDRPADSVIQYGGLLSQKGLAQVDRAVTTTLTLTEEGTQYLKEGLPERQLYDSFSESASIADLNTHPHAKIGLGWMKRLGWVKIEAGNVIKTGDPAPSPIELALKNPDAAPADIKKDLLKRGLVTEEESVRYTITITDEGKKLAAAGITLTQETGTLTADQISSGAWKDLSLRRYDITKHPRPVWPGKIHPYQRMIDEMRRILLDMGFTELHGSIIQGAFWNFDALFQPQDHPAREMQDTFHLAGKQELPVGWEKVRDMHESGGETSSTGWGGKWDPEKAKATVLRTHTTSLSIQHLAAHPEPPVKAFCIGRVYRREAIDPTHLPEFEQLEGIVMDTHVNFRNLLGYLKEFYGRMGFESVRFRPGYFPYTEPSVEPEVYIEGLGWVELGGAGIFREEVTAPWGITCPVLAWGLGVSRVAMLRMGLTDLRELYQSDIDWVRNVPVVQGGRC</sequence>
<organism>
    <name type="scientific">Methanospirillum hungatei JF-1 (strain ATCC 27890 / DSM 864 / NBRC 100397 / JF-1)</name>
    <dbReference type="NCBI Taxonomy" id="323259"/>
    <lineage>
        <taxon>Archaea</taxon>
        <taxon>Methanobacteriati</taxon>
        <taxon>Methanobacteriota</taxon>
        <taxon>Stenosarchaea group</taxon>
        <taxon>Methanomicrobia</taxon>
        <taxon>Methanomicrobiales</taxon>
        <taxon>Methanospirillaceae</taxon>
        <taxon>Methanospirillum</taxon>
    </lineage>
</organism>
<keyword id="KW-0030">Aminoacyl-tRNA synthetase</keyword>
<keyword id="KW-0067">ATP-binding</keyword>
<keyword id="KW-0963">Cytoplasm</keyword>
<keyword id="KW-0436">Ligase</keyword>
<keyword id="KW-0460">Magnesium</keyword>
<keyword id="KW-0479">Metal-binding</keyword>
<keyword id="KW-0547">Nucleotide-binding</keyword>
<keyword id="KW-0648">Protein biosynthesis</keyword>
<keyword id="KW-1185">Reference proteome</keyword>
<accession>Q2FLL0</accession>
<protein>
    <recommendedName>
        <fullName evidence="1">Phenylalanine--tRNA ligase alpha subunit</fullName>
        <ecNumber evidence="1">6.1.1.20</ecNumber>
    </recommendedName>
    <alternativeName>
        <fullName evidence="1">Phenylalanyl-tRNA synthetase alpha subunit</fullName>
        <shortName evidence="1">PheRS</shortName>
    </alternativeName>
</protein>
<comment type="catalytic activity">
    <reaction evidence="1">
        <text>tRNA(Phe) + L-phenylalanine + ATP = L-phenylalanyl-tRNA(Phe) + AMP + diphosphate + H(+)</text>
        <dbReference type="Rhea" id="RHEA:19413"/>
        <dbReference type="Rhea" id="RHEA-COMP:9668"/>
        <dbReference type="Rhea" id="RHEA-COMP:9699"/>
        <dbReference type="ChEBI" id="CHEBI:15378"/>
        <dbReference type="ChEBI" id="CHEBI:30616"/>
        <dbReference type="ChEBI" id="CHEBI:33019"/>
        <dbReference type="ChEBI" id="CHEBI:58095"/>
        <dbReference type="ChEBI" id="CHEBI:78442"/>
        <dbReference type="ChEBI" id="CHEBI:78531"/>
        <dbReference type="ChEBI" id="CHEBI:456215"/>
        <dbReference type="EC" id="6.1.1.20"/>
    </reaction>
</comment>
<comment type="cofactor">
    <cofactor evidence="1">
        <name>Mg(2+)</name>
        <dbReference type="ChEBI" id="CHEBI:18420"/>
    </cofactor>
    <text evidence="1">Binds 2 magnesium ions per tetramer.</text>
</comment>
<comment type="subunit">
    <text evidence="1">Tetramer of two alpha and two beta subunits.</text>
</comment>
<comment type="subcellular location">
    <subcellularLocation>
        <location evidence="1">Cytoplasm</location>
    </subcellularLocation>
</comment>
<comment type="similarity">
    <text evidence="1">Belongs to the class-II aminoacyl-tRNA synthetase family. Phe-tRNA synthetase alpha subunit type 2 subfamily.</text>
</comment>
<reference key="1">
    <citation type="journal article" date="2016" name="Stand. Genomic Sci.">
        <title>Complete genome sequence of Methanospirillum hungatei type strain JF1.</title>
        <authorList>
            <person name="Gunsalus R.P."/>
            <person name="Cook L.E."/>
            <person name="Crable B."/>
            <person name="Rohlin L."/>
            <person name="McDonald E."/>
            <person name="Mouttaki H."/>
            <person name="Sieber J.R."/>
            <person name="Poweleit N."/>
            <person name="Zhou H."/>
            <person name="Lapidus A.L."/>
            <person name="Daligault H.E."/>
            <person name="Land M."/>
            <person name="Gilna P."/>
            <person name="Ivanova N."/>
            <person name="Kyrpides N."/>
            <person name="Culley D.E."/>
            <person name="McInerney M.J."/>
        </authorList>
    </citation>
    <scope>NUCLEOTIDE SEQUENCE [LARGE SCALE GENOMIC DNA]</scope>
    <source>
        <strain>ATCC 27890 / DSM 864 / NBRC 100397 / JF-1</strain>
    </source>
</reference>